<keyword id="KW-0963">Cytoplasm</keyword>
<organism>
    <name type="scientific">Clostridium botulinum (strain 657 / Type Ba4)</name>
    <dbReference type="NCBI Taxonomy" id="515621"/>
    <lineage>
        <taxon>Bacteria</taxon>
        <taxon>Bacillati</taxon>
        <taxon>Bacillota</taxon>
        <taxon>Clostridia</taxon>
        <taxon>Eubacteriales</taxon>
        <taxon>Clostridiaceae</taxon>
        <taxon>Clostridium</taxon>
    </lineage>
</organism>
<comment type="subcellular location">
    <subcellularLocation>
        <location evidence="1">Cytoplasm</location>
    </subcellularLocation>
</comment>
<comment type="similarity">
    <text evidence="1">Belongs to the UPF0291 family.</text>
</comment>
<protein>
    <recommendedName>
        <fullName evidence="1">UPF0291 protein CLJ_B2839</fullName>
    </recommendedName>
</protein>
<name>Y2839_CLOB6</name>
<feature type="chain" id="PRO_1000213548" description="UPF0291 protein CLJ_B2839">
    <location>
        <begin position="1"/>
        <end position="62"/>
    </location>
</feature>
<proteinExistence type="inferred from homology"/>
<gene>
    <name type="ordered locus">CLJ_B2839</name>
</gene>
<sequence>MDMKKLIERINFLYKKSKEEVLTEEEKIEQQKLRREYIDIIKGNVKVQLEGVEKIPTPNRKN</sequence>
<evidence type="ECO:0000255" key="1">
    <source>
        <dbReference type="HAMAP-Rule" id="MF_01103"/>
    </source>
</evidence>
<accession>C3L195</accession>
<reference key="1">
    <citation type="submission" date="2008-05" db="EMBL/GenBank/DDBJ databases">
        <title>Genome sequence of Clostridium botulinum Ba4 strain 657.</title>
        <authorList>
            <person name="Shrivastava S."/>
            <person name="Brown J.L."/>
            <person name="Bruce D."/>
            <person name="Detter C."/>
            <person name="Munk C."/>
            <person name="Smith L.A."/>
            <person name="Smith T.J."/>
            <person name="Sutton G."/>
            <person name="Brettin T.S."/>
        </authorList>
    </citation>
    <scope>NUCLEOTIDE SEQUENCE [LARGE SCALE GENOMIC DNA]</scope>
    <source>
        <strain>657 / Type Ba4</strain>
    </source>
</reference>
<dbReference type="EMBL" id="CP001083">
    <property type="protein sequence ID" value="ACQ54380.1"/>
    <property type="molecule type" value="Genomic_DNA"/>
</dbReference>
<dbReference type="RefSeq" id="WP_004441758.1">
    <property type="nucleotide sequence ID" value="NC_012658.1"/>
</dbReference>
<dbReference type="SMR" id="C3L195"/>
<dbReference type="KEGG" id="cbi:CLJ_B2839"/>
<dbReference type="HOGENOM" id="CLU_173137_3_1_9"/>
<dbReference type="Proteomes" id="UP000002333">
    <property type="component" value="Chromosome"/>
</dbReference>
<dbReference type="GO" id="GO:0005737">
    <property type="term" value="C:cytoplasm"/>
    <property type="evidence" value="ECO:0007669"/>
    <property type="project" value="UniProtKB-SubCell"/>
</dbReference>
<dbReference type="Gene3D" id="1.10.287.540">
    <property type="entry name" value="Helix hairpin bin"/>
    <property type="match status" value="1"/>
</dbReference>
<dbReference type="HAMAP" id="MF_01103">
    <property type="entry name" value="UPF0291"/>
    <property type="match status" value="1"/>
</dbReference>
<dbReference type="InterPro" id="IPR009242">
    <property type="entry name" value="DUF896"/>
</dbReference>
<dbReference type="PANTHER" id="PTHR37300">
    <property type="entry name" value="UPF0291 PROTEIN CBO2609/CLC_2481"/>
    <property type="match status" value="1"/>
</dbReference>
<dbReference type="PANTHER" id="PTHR37300:SF1">
    <property type="entry name" value="UPF0291 PROTEIN YNZC"/>
    <property type="match status" value="1"/>
</dbReference>
<dbReference type="Pfam" id="PF05979">
    <property type="entry name" value="DUF896"/>
    <property type="match status" value="1"/>
</dbReference>
<dbReference type="SUPFAM" id="SSF158221">
    <property type="entry name" value="YnzC-like"/>
    <property type="match status" value="1"/>
</dbReference>